<proteinExistence type="inferred from homology"/>
<evidence type="ECO:0000255" key="1">
    <source>
        <dbReference type="HAMAP-Rule" id="MF_00469"/>
    </source>
</evidence>
<evidence type="ECO:0000256" key="2">
    <source>
        <dbReference type="SAM" id="MobiDB-lite"/>
    </source>
</evidence>
<dbReference type="EC" id="1.14.-.-" evidence="1"/>
<dbReference type="EMBL" id="BX569691">
    <property type="protein sequence ID" value="CAE07447.1"/>
    <property type="molecule type" value="Genomic_DNA"/>
</dbReference>
<dbReference type="SMR" id="Q7U7P9"/>
<dbReference type="STRING" id="84588.SYNW0932"/>
<dbReference type="KEGG" id="syw:SYNW0932"/>
<dbReference type="eggNOG" id="COG1054">
    <property type="taxonomic scope" value="Bacteria"/>
</dbReference>
<dbReference type="HOGENOM" id="CLU_038878_0_0_3"/>
<dbReference type="Proteomes" id="UP000001422">
    <property type="component" value="Chromosome"/>
</dbReference>
<dbReference type="GO" id="GO:0016705">
    <property type="term" value="F:oxidoreductase activity, acting on paired donors, with incorporation or reduction of molecular oxygen"/>
    <property type="evidence" value="ECO:0007669"/>
    <property type="project" value="UniProtKB-UniRule"/>
</dbReference>
<dbReference type="GO" id="GO:0006400">
    <property type="term" value="P:tRNA modification"/>
    <property type="evidence" value="ECO:0007669"/>
    <property type="project" value="UniProtKB-UniRule"/>
</dbReference>
<dbReference type="CDD" id="cd01518">
    <property type="entry name" value="RHOD_YceA"/>
    <property type="match status" value="1"/>
</dbReference>
<dbReference type="Gene3D" id="3.30.70.100">
    <property type="match status" value="1"/>
</dbReference>
<dbReference type="Gene3D" id="3.40.250.10">
    <property type="entry name" value="Rhodanese-like domain"/>
    <property type="match status" value="1"/>
</dbReference>
<dbReference type="HAMAP" id="MF_00469">
    <property type="entry name" value="TrhO"/>
    <property type="match status" value="1"/>
</dbReference>
<dbReference type="InterPro" id="IPR001763">
    <property type="entry name" value="Rhodanese-like_dom"/>
</dbReference>
<dbReference type="InterPro" id="IPR036873">
    <property type="entry name" value="Rhodanese-like_dom_sf"/>
</dbReference>
<dbReference type="InterPro" id="IPR020936">
    <property type="entry name" value="TrhO"/>
</dbReference>
<dbReference type="InterPro" id="IPR040503">
    <property type="entry name" value="TRHO_N"/>
</dbReference>
<dbReference type="NCBIfam" id="NF001136">
    <property type="entry name" value="PRK00142.1-4"/>
    <property type="match status" value="1"/>
</dbReference>
<dbReference type="PANTHER" id="PTHR43268:SF3">
    <property type="entry name" value="RHODANESE-LIKE DOMAIN-CONTAINING PROTEIN 7-RELATED"/>
    <property type="match status" value="1"/>
</dbReference>
<dbReference type="PANTHER" id="PTHR43268">
    <property type="entry name" value="THIOSULFATE SULFURTRANSFERASE/RHODANESE-LIKE DOMAIN-CONTAINING PROTEIN 2"/>
    <property type="match status" value="1"/>
</dbReference>
<dbReference type="Pfam" id="PF00581">
    <property type="entry name" value="Rhodanese"/>
    <property type="match status" value="1"/>
</dbReference>
<dbReference type="Pfam" id="PF17773">
    <property type="entry name" value="UPF0176_N"/>
    <property type="match status" value="1"/>
</dbReference>
<dbReference type="SMART" id="SM00450">
    <property type="entry name" value="RHOD"/>
    <property type="match status" value="1"/>
</dbReference>
<dbReference type="SUPFAM" id="SSF52821">
    <property type="entry name" value="Rhodanese/Cell cycle control phosphatase"/>
    <property type="match status" value="1"/>
</dbReference>
<dbReference type="PROSITE" id="PS50206">
    <property type="entry name" value="RHODANESE_3"/>
    <property type="match status" value="1"/>
</dbReference>
<keyword id="KW-0560">Oxidoreductase</keyword>
<keyword id="KW-0819">tRNA processing</keyword>
<gene>
    <name evidence="1" type="primary">trhO</name>
    <name type="ordered locus">SYNW0932</name>
</gene>
<organism>
    <name type="scientific">Parasynechococcus marenigrum (strain WH8102)</name>
    <dbReference type="NCBI Taxonomy" id="84588"/>
    <lineage>
        <taxon>Bacteria</taxon>
        <taxon>Bacillati</taxon>
        <taxon>Cyanobacteriota</taxon>
        <taxon>Cyanophyceae</taxon>
        <taxon>Synechococcales</taxon>
        <taxon>Prochlorococcaceae</taxon>
        <taxon>Parasynechococcus</taxon>
        <taxon>Parasynechococcus marenigrum</taxon>
    </lineage>
</organism>
<protein>
    <recommendedName>
        <fullName evidence="1">tRNA uridine(34) hydroxylase</fullName>
        <ecNumber evidence="1">1.14.-.-</ecNumber>
    </recommendedName>
    <alternativeName>
        <fullName evidence="1">tRNA hydroxylation protein O</fullName>
    </alternativeName>
</protein>
<feature type="chain" id="PRO_0000161532" description="tRNA uridine(34) hydroxylase">
    <location>
        <begin position="1"/>
        <end position="321"/>
    </location>
</feature>
<feature type="domain" description="Rhodanese" evidence="1">
    <location>
        <begin position="135"/>
        <end position="233"/>
    </location>
</feature>
<feature type="region of interest" description="Disordered" evidence="2">
    <location>
        <begin position="301"/>
        <end position="321"/>
    </location>
</feature>
<feature type="active site" description="Cysteine persulfide intermediate" evidence="1">
    <location>
        <position position="193"/>
    </location>
</feature>
<accession>Q7U7P9</accession>
<comment type="function">
    <text evidence="1">Catalyzes oxygen-dependent 5-hydroxyuridine (ho5U) modification at position 34 in tRNAs.</text>
</comment>
<comment type="catalytic activity">
    <reaction evidence="1">
        <text>uridine(34) in tRNA + AH2 + O2 = 5-hydroxyuridine(34) in tRNA + A + H2O</text>
        <dbReference type="Rhea" id="RHEA:64224"/>
        <dbReference type="Rhea" id="RHEA-COMP:11727"/>
        <dbReference type="Rhea" id="RHEA-COMP:13381"/>
        <dbReference type="ChEBI" id="CHEBI:13193"/>
        <dbReference type="ChEBI" id="CHEBI:15377"/>
        <dbReference type="ChEBI" id="CHEBI:15379"/>
        <dbReference type="ChEBI" id="CHEBI:17499"/>
        <dbReference type="ChEBI" id="CHEBI:65315"/>
        <dbReference type="ChEBI" id="CHEBI:136877"/>
    </reaction>
</comment>
<comment type="similarity">
    <text evidence="1">Belongs to the TrhO family.</text>
</comment>
<sequence>MPDHGMSRLLVAAFYAFTPLDDDQREALLSALPTQASHGAVLGSVLVAKEGVNGTISGPEQGVEGLLEHLQEQLKLGEQHFERLEVKRSWAERSVFRRFKARRKKEIVTMGVTGVDPRANVGTYVDPEDWNGLVDDPDTLVIDTRNHYETAIGSFDGAIDPGTDSFRDFPHWAETKLRPLIDETAPKRIAMFCTGGIRCEKASSYLQHQGFGEVHHLRGGILKYLEQVPEEESRWRGECFVFDQRVALNHQLEPGEHSLCHACGLPLSPEQRSLPSYIKGVQCLHCIDRFSESDRQRFAMRQRQMDQLSSASSKKSDDFSL</sequence>
<reference key="1">
    <citation type="journal article" date="2003" name="Nature">
        <title>The genome of a motile marine Synechococcus.</title>
        <authorList>
            <person name="Palenik B."/>
            <person name="Brahamsha B."/>
            <person name="Larimer F.W."/>
            <person name="Land M.L."/>
            <person name="Hauser L."/>
            <person name="Chain P."/>
            <person name="Lamerdin J.E."/>
            <person name="Regala W."/>
            <person name="Allen E.E."/>
            <person name="McCarren J."/>
            <person name="Paulsen I.T."/>
            <person name="Dufresne A."/>
            <person name="Partensky F."/>
            <person name="Webb E.A."/>
            <person name="Waterbury J."/>
        </authorList>
    </citation>
    <scope>NUCLEOTIDE SEQUENCE [LARGE SCALE GENOMIC DNA]</scope>
    <source>
        <strain>WH8102</strain>
    </source>
</reference>
<name>TRHO_PARMW</name>